<protein>
    <recommendedName>
        <fullName evidence="16">ETS translocation variant 1</fullName>
    </recommendedName>
    <alternativeName>
        <fullName evidence="17">Ets-related protein 81</fullName>
    </alternativeName>
</protein>
<organism evidence="18">
    <name type="scientific">Homo sapiens</name>
    <name type="common">Human</name>
    <dbReference type="NCBI Taxonomy" id="9606"/>
    <lineage>
        <taxon>Eukaryota</taxon>
        <taxon>Metazoa</taxon>
        <taxon>Chordata</taxon>
        <taxon>Craniata</taxon>
        <taxon>Vertebrata</taxon>
        <taxon>Euteleostomi</taxon>
        <taxon>Mammalia</taxon>
        <taxon>Eutheria</taxon>
        <taxon>Euarchontoglires</taxon>
        <taxon>Primates</taxon>
        <taxon>Haplorrhini</taxon>
        <taxon>Catarrhini</taxon>
        <taxon>Hominidae</taxon>
        <taxon>Homo</taxon>
    </lineage>
</organism>
<reference key="1">
    <citation type="journal article" date="1995" name="Oncogene">
        <title>A variant Ewing's sarcoma translocation (7;22) fuses the EWS gene to the ETS gene ETV1.</title>
        <authorList>
            <person name="Jeon I.-S."/>
            <person name="Davis J.N."/>
            <person name="Braun B.S."/>
            <person name="Sublett J.E."/>
            <person name="Roussel M.F."/>
            <person name="Denny C.T."/>
            <person name="Shapiro D.N."/>
        </authorList>
    </citation>
    <scope>NUCLEOTIDE SEQUENCE [MRNA] (ISOFORM 1)</scope>
    <scope>CHROMOSOMAL TRANSLOCATION WITH EWSR1</scope>
</reference>
<reference key="2">
    <citation type="journal article" date="1995" name="Oncogene">
        <title>Molecular characterization of the ets-related human transcription factor ER81.</title>
        <authorList>
            <person name="Monte D."/>
            <person name="Coutte L."/>
            <person name="Baert J.-L."/>
            <person name="Angeli I."/>
            <person name="Stehelin D."/>
            <person name="de Launoit Y."/>
        </authorList>
    </citation>
    <scope>NUCLEOTIDE SEQUENCE [MRNA] (ISOFORM 2)</scope>
    <scope>FUNCTION</scope>
    <source>
        <tissue>Kidney</tissue>
    </source>
</reference>
<reference key="3">
    <citation type="submission" date="1998-11" db="EMBL/GenBank/DDBJ databases">
        <title>Characterization of the human and mouse ER81/ETV1 transcription factor genes. Role of the two human alternatively spliced isoforms.</title>
        <authorList>
            <person name="Coutte L."/>
            <person name="Monte D."/>
            <person name="Pouilly L."/>
            <person name="Dewitte F."/>
            <person name="Vidaud M."/>
            <person name="Baert J.-L."/>
            <person name="de Launoit Y."/>
        </authorList>
    </citation>
    <scope>NUCLEOTIDE SEQUENCE [GENOMIC DNA] (ISOFORMS 1 AND 2)</scope>
</reference>
<reference key="4">
    <citation type="journal article" date="2004" name="Nat. Genet.">
        <title>Complete sequencing and characterization of 21,243 full-length human cDNAs.</title>
        <authorList>
            <person name="Ota T."/>
            <person name="Suzuki Y."/>
            <person name="Nishikawa T."/>
            <person name="Otsuki T."/>
            <person name="Sugiyama T."/>
            <person name="Irie R."/>
            <person name="Wakamatsu A."/>
            <person name="Hayashi K."/>
            <person name="Sato H."/>
            <person name="Nagai K."/>
            <person name="Kimura K."/>
            <person name="Makita H."/>
            <person name="Sekine M."/>
            <person name="Obayashi M."/>
            <person name="Nishi T."/>
            <person name="Shibahara T."/>
            <person name="Tanaka T."/>
            <person name="Ishii S."/>
            <person name="Yamamoto J."/>
            <person name="Saito K."/>
            <person name="Kawai Y."/>
            <person name="Isono Y."/>
            <person name="Nakamura Y."/>
            <person name="Nagahari K."/>
            <person name="Murakami K."/>
            <person name="Yasuda T."/>
            <person name="Iwayanagi T."/>
            <person name="Wagatsuma M."/>
            <person name="Shiratori A."/>
            <person name="Sudo H."/>
            <person name="Hosoiri T."/>
            <person name="Kaku Y."/>
            <person name="Kodaira H."/>
            <person name="Kondo H."/>
            <person name="Sugawara M."/>
            <person name="Takahashi M."/>
            <person name="Kanda K."/>
            <person name="Yokoi T."/>
            <person name="Furuya T."/>
            <person name="Kikkawa E."/>
            <person name="Omura Y."/>
            <person name="Abe K."/>
            <person name="Kamihara K."/>
            <person name="Katsuta N."/>
            <person name="Sato K."/>
            <person name="Tanikawa M."/>
            <person name="Yamazaki M."/>
            <person name="Ninomiya K."/>
            <person name="Ishibashi T."/>
            <person name="Yamashita H."/>
            <person name="Murakawa K."/>
            <person name="Fujimori K."/>
            <person name="Tanai H."/>
            <person name="Kimata M."/>
            <person name="Watanabe M."/>
            <person name="Hiraoka S."/>
            <person name="Chiba Y."/>
            <person name="Ishida S."/>
            <person name="Ono Y."/>
            <person name="Takiguchi S."/>
            <person name="Watanabe S."/>
            <person name="Yosida M."/>
            <person name="Hotuta T."/>
            <person name="Kusano J."/>
            <person name="Kanehori K."/>
            <person name="Takahashi-Fujii A."/>
            <person name="Hara H."/>
            <person name="Tanase T.-O."/>
            <person name="Nomura Y."/>
            <person name="Togiya S."/>
            <person name="Komai F."/>
            <person name="Hara R."/>
            <person name="Takeuchi K."/>
            <person name="Arita M."/>
            <person name="Imose N."/>
            <person name="Musashino K."/>
            <person name="Yuuki H."/>
            <person name="Oshima A."/>
            <person name="Sasaki N."/>
            <person name="Aotsuka S."/>
            <person name="Yoshikawa Y."/>
            <person name="Matsunawa H."/>
            <person name="Ichihara T."/>
            <person name="Shiohata N."/>
            <person name="Sano S."/>
            <person name="Moriya S."/>
            <person name="Momiyama H."/>
            <person name="Satoh N."/>
            <person name="Takami S."/>
            <person name="Terashima Y."/>
            <person name="Suzuki O."/>
            <person name="Nakagawa S."/>
            <person name="Senoh A."/>
            <person name="Mizoguchi H."/>
            <person name="Goto Y."/>
            <person name="Shimizu F."/>
            <person name="Wakebe H."/>
            <person name="Hishigaki H."/>
            <person name="Watanabe T."/>
            <person name="Sugiyama A."/>
            <person name="Takemoto M."/>
            <person name="Kawakami B."/>
            <person name="Yamazaki M."/>
            <person name="Watanabe K."/>
            <person name="Kumagai A."/>
            <person name="Itakura S."/>
            <person name="Fukuzumi Y."/>
            <person name="Fujimori Y."/>
            <person name="Komiyama M."/>
            <person name="Tashiro H."/>
            <person name="Tanigami A."/>
            <person name="Fujiwara T."/>
            <person name="Ono T."/>
            <person name="Yamada K."/>
            <person name="Fujii Y."/>
            <person name="Ozaki K."/>
            <person name="Hirao M."/>
            <person name="Ohmori Y."/>
            <person name="Kawabata A."/>
            <person name="Hikiji T."/>
            <person name="Kobatake N."/>
            <person name="Inagaki H."/>
            <person name="Ikema Y."/>
            <person name="Okamoto S."/>
            <person name="Okitani R."/>
            <person name="Kawakami T."/>
            <person name="Noguchi S."/>
            <person name="Itoh T."/>
            <person name="Shigeta K."/>
            <person name="Senba T."/>
            <person name="Matsumura K."/>
            <person name="Nakajima Y."/>
            <person name="Mizuno T."/>
            <person name="Morinaga M."/>
            <person name="Sasaki M."/>
            <person name="Togashi T."/>
            <person name="Oyama M."/>
            <person name="Hata H."/>
            <person name="Watanabe M."/>
            <person name="Komatsu T."/>
            <person name="Mizushima-Sugano J."/>
            <person name="Satoh T."/>
            <person name="Shirai Y."/>
            <person name="Takahashi Y."/>
            <person name="Nakagawa K."/>
            <person name="Okumura K."/>
            <person name="Nagase T."/>
            <person name="Nomura N."/>
            <person name="Kikuchi H."/>
            <person name="Masuho Y."/>
            <person name="Yamashita R."/>
            <person name="Nakai K."/>
            <person name="Yada T."/>
            <person name="Nakamura Y."/>
            <person name="Ohara O."/>
            <person name="Isogai T."/>
            <person name="Sugano S."/>
        </authorList>
    </citation>
    <scope>NUCLEOTIDE SEQUENCE [LARGE SCALE MRNA] (ISOFORMS 1; 2; 4 AND 5)</scope>
    <scope>VARIANT GLY-100</scope>
    <source>
        <tissue>Brain</tissue>
        <tissue>Trachea</tissue>
    </source>
</reference>
<reference key="5">
    <citation type="submission" date="2005-03" db="EMBL/GenBank/DDBJ databases">
        <title>Homo sapiens protein coding cDNA.</title>
        <authorList>
            <person name="Totoki Y."/>
            <person name="Toyoda A."/>
            <person name="Takeda T."/>
            <person name="Sakaki Y."/>
            <person name="Tanaka A."/>
            <person name="Yokoyama S."/>
            <person name="Ohara O."/>
            <person name="Nagase T."/>
            <person name="Kikuno R.F."/>
        </authorList>
    </citation>
    <scope>NUCLEOTIDE SEQUENCE [LARGE SCALE MRNA] (ISOFORM 3)</scope>
    <scope>VARIANT GLY-100</scope>
    <source>
        <tissue>Brain</tissue>
    </source>
</reference>
<reference key="6">
    <citation type="journal article" date="2007" name="BMC Genomics">
        <title>The full-ORF clone resource of the German cDNA consortium.</title>
        <authorList>
            <person name="Bechtel S."/>
            <person name="Rosenfelder H."/>
            <person name="Duda A."/>
            <person name="Schmidt C.P."/>
            <person name="Ernst U."/>
            <person name="Wellenreuther R."/>
            <person name="Mehrle A."/>
            <person name="Schuster C."/>
            <person name="Bahr A."/>
            <person name="Bloecker H."/>
            <person name="Heubner D."/>
            <person name="Hoerlein A."/>
            <person name="Michel G."/>
            <person name="Wedler H."/>
            <person name="Koehrer K."/>
            <person name="Ottenwaelder B."/>
            <person name="Poustka A."/>
            <person name="Wiemann S."/>
            <person name="Schupp I."/>
        </authorList>
    </citation>
    <scope>NUCLEOTIDE SEQUENCE [LARGE SCALE MRNA] (ISOFORM 6)</scope>
    <source>
        <tissue>Seminoma</tissue>
    </source>
</reference>
<reference key="7">
    <citation type="journal article" date="2003" name="Nature">
        <title>The DNA sequence of human chromosome 7.</title>
        <authorList>
            <person name="Hillier L.W."/>
            <person name="Fulton R.S."/>
            <person name="Fulton L.A."/>
            <person name="Graves T.A."/>
            <person name="Pepin K.H."/>
            <person name="Wagner-McPherson C."/>
            <person name="Layman D."/>
            <person name="Maas J."/>
            <person name="Jaeger S."/>
            <person name="Walker R."/>
            <person name="Wylie K."/>
            <person name="Sekhon M."/>
            <person name="Becker M.C."/>
            <person name="O'Laughlin M.D."/>
            <person name="Schaller M.E."/>
            <person name="Fewell G.A."/>
            <person name="Delehaunty K.D."/>
            <person name="Miner T.L."/>
            <person name="Nash W.E."/>
            <person name="Cordes M."/>
            <person name="Du H."/>
            <person name="Sun H."/>
            <person name="Edwards J."/>
            <person name="Bradshaw-Cordum H."/>
            <person name="Ali J."/>
            <person name="Andrews S."/>
            <person name="Isak A."/>
            <person name="Vanbrunt A."/>
            <person name="Nguyen C."/>
            <person name="Du F."/>
            <person name="Lamar B."/>
            <person name="Courtney L."/>
            <person name="Kalicki J."/>
            <person name="Ozersky P."/>
            <person name="Bielicki L."/>
            <person name="Scott K."/>
            <person name="Holmes A."/>
            <person name="Harkins R."/>
            <person name="Harris A."/>
            <person name="Strong C.M."/>
            <person name="Hou S."/>
            <person name="Tomlinson C."/>
            <person name="Dauphin-Kohlberg S."/>
            <person name="Kozlowicz-Reilly A."/>
            <person name="Leonard S."/>
            <person name="Rohlfing T."/>
            <person name="Rock S.M."/>
            <person name="Tin-Wollam A.-M."/>
            <person name="Abbott A."/>
            <person name="Minx P."/>
            <person name="Maupin R."/>
            <person name="Strowmatt C."/>
            <person name="Latreille P."/>
            <person name="Miller N."/>
            <person name="Johnson D."/>
            <person name="Murray J."/>
            <person name="Woessner J.P."/>
            <person name="Wendl M.C."/>
            <person name="Yang S.-P."/>
            <person name="Schultz B.R."/>
            <person name="Wallis J.W."/>
            <person name="Spieth J."/>
            <person name="Bieri T.A."/>
            <person name="Nelson J.O."/>
            <person name="Berkowicz N."/>
            <person name="Wohldmann P.E."/>
            <person name="Cook L.L."/>
            <person name="Hickenbotham M.T."/>
            <person name="Eldred J."/>
            <person name="Williams D."/>
            <person name="Bedell J.A."/>
            <person name="Mardis E.R."/>
            <person name="Clifton S.W."/>
            <person name="Chissoe S.L."/>
            <person name="Marra M.A."/>
            <person name="Raymond C."/>
            <person name="Haugen E."/>
            <person name="Gillett W."/>
            <person name="Zhou Y."/>
            <person name="James R."/>
            <person name="Phelps K."/>
            <person name="Iadanoto S."/>
            <person name="Bubb K."/>
            <person name="Simms E."/>
            <person name="Levy R."/>
            <person name="Clendenning J."/>
            <person name="Kaul R."/>
            <person name="Kent W.J."/>
            <person name="Furey T.S."/>
            <person name="Baertsch R.A."/>
            <person name="Brent M.R."/>
            <person name="Keibler E."/>
            <person name="Flicek P."/>
            <person name="Bork P."/>
            <person name="Suyama M."/>
            <person name="Bailey J.A."/>
            <person name="Portnoy M.E."/>
            <person name="Torrents D."/>
            <person name="Chinwalla A.T."/>
            <person name="Gish W.R."/>
            <person name="Eddy S.R."/>
            <person name="McPherson J.D."/>
            <person name="Olson M.V."/>
            <person name="Eichler E.E."/>
            <person name="Green E.D."/>
            <person name="Waterston R.H."/>
            <person name="Wilson R.K."/>
        </authorList>
    </citation>
    <scope>NUCLEOTIDE SEQUENCE [LARGE SCALE GENOMIC DNA]</scope>
</reference>
<reference key="8">
    <citation type="journal article" date="2003" name="Science">
        <title>Human chromosome 7: DNA sequence and biology.</title>
        <authorList>
            <person name="Scherer S.W."/>
            <person name="Cheung J."/>
            <person name="MacDonald J.R."/>
            <person name="Osborne L.R."/>
            <person name="Nakabayashi K."/>
            <person name="Herbrick J.-A."/>
            <person name="Carson A.R."/>
            <person name="Parker-Katiraee L."/>
            <person name="Skaug J."/>
            <person name="Khaja R."/>
            <person name="Zhang J."/>
            <person name="Hudek A.K."/>
            <person name="Li M."/>
            <person name="Haddad M."/>
            <person name="Duggan G.E."/>
            <person name="Fernandez B.A."/>
            <person name="Kanematsu E."/>
            <person name="Gentles S."/>
            <person name="Christopoulos C.C."/>
            <person name="Choufani S."/>
            <person name="Kwasnicka D."/>
            <person name="Zheng X.H."/>
            <person name="Lai Z."/>
            <person name="Nusskern D.R."/>
            <person name="Zhang Q."/>
            <person name="Gu Z."/>
            <person name="Lu F."/>
            <person name="Zeesman S."/>
            <person name="Nowaczyk M.J."/>
            <person name="Teshima I."/>
            <person name="Chitayat D."/>
            <person name="Shuman C."/>
            <person name="Weksberg R."/>
            <person name="Zackai E.H."/>
            <person name="Grebe T.A."/>
            <person name="Cox S.R."/>
            <person name="Kirkpatrick S.J."/>
            <person name="Rahman N."/>
            <person name="Friedman J.M."/>
            <person name="Heng H.H.Q."/>
            <person name="Pelicci P.G."/>
            <person name="Lo-Coco F."/>
            <person name="Belloni E."/>
            <person name="Shaffer L.G."/>
            <person name="Pober B."/>
            <person name="Morton C.C."/>
            <person name="Gusella J.F."/>
            <person name="Bruns G.A.P."/>
            <person name="Korf B.R."/>
            <person name="Quade B.J."/>
            <person name="Ligon A.H."/>
            <person name="Ferguson H."/>
            <person name="Higgins A.W."/>
            <person name="Leach N.T."/>
            <person name="Herrick S.R."/>
            <person name="Lemyre E."/>
            <person name="Farra C.G."/>
            <person name="Kim H.-G."/>
            <person name="Summers A.M."/>
            <person name="Gripp K.W."/>
            <person name="Roberts W."/>
            <person name="Szatmari P."/>
            <person name="Winsor E.J.T."/>
            <person name="Grzeschik K.-H."/>
            <person name="Teebi A."/>
            <person name="Minassian B.A."/>
            <person name="Kere J."/>
            <person name="Armengol L."/>
            <person name="Pujana M.A."/>
            <person name="Estivill X."/>
            <person name="Wilson M.D."/>
            <person name="Koop B.F."/>
            <person name="Tosi S."/>
            <person name="Moore G.E."/>
            <person name="Boright A.P."/>
            <person name="Zlotorynski E."/>
            <person name="Kerem B."/>
            <person name="Kroisel P.M."/>
            <person name="Petek E."/>
            <person name="Oscier D.G."/>
            <person name="Mould S.J."/>
            <person name="Doehner H."/>
            <person name="Doehner K."/>
            <person name="Rommens J.M."/>
            <person name="Vincent J.B."/>
            <person name="Venter J.C."/>
            <person name="Li P.W."/>
            <person name="Mural R.J."/>
            <person name="Adams M.D."/>
            <person name="Tsui L.-C."/>
        </authorList>
    </citation>
    <scope>NUCLEOTIDE SEQUENCE [LARGE SCALE GENOMIC DNA]</scope>
</reference>
<reference key="9">
    <citation type="journal article" date="2004" name="Genome Res.">
        <title>The status, quality, and expansion of the NIH full-length cDNA project: the Mammalian Gene Collection (MGC).</title>
        <authorList>
            <consortium name="The MGC Project Team"/>
        </authorList>
    </citation>
    <scope>NUCLEOTIDE SEQUENCE [LARGE SCALE MRNA] (ISOFORM 1)</scope>
</reference>
<reference key="10">
    <citation type="journal article" date="2002" name="J. Biol. Chem.">
        <title>Regulation of the ETS transcription factor ER81 by the 90-kDa ribosomal S6 kinase 1 and protein kinase A.</title>
        <authorList>
            <person name="Wu J."/>
            <person name="Janknecht R."/>
        </authorList>
    </citation>
    <scope>PHOSPHORYLATION AT SER-191 AND SER-216</scope>
</reference>
<reference key="11">
    <citation type="journal article" date="2003" name="Oncogene">
        <title>Regulation of the ER81 transcription factor and its coactivators by mitogen- and stress-activated protein kinase 1 (MSK1).</title>
        <authorList>
            <person name="Janknecht R."/>
        </authorList>
    </citation>
    <scope>PHOSPHORYLATION AT SER-191 AND SER-216</scope>
    <scope>MUTAGENESIS OF SER-191 AND SER-216</scope>
</reference>
<reference key="12">
    <citation type="journal article" date="2005" name="J. Biol. Chem.">
        <title>Systematic identification and analysis of mammalian small ubiquitin-like modifier substrates.</title>
        <authorList>
            <person name="Gocke C.B."/>
            <person name="Yu H."/>
            <person name="Kang J."/>
        </authorList>
    </citation>
    <scope>SUMOYLATION</scope>
</reference>
<reference key="13">
    <citation type="journal article" date="2017" name="Nat. Struct. Mol. Biol.">
        <title>Site-specific mapping of the human SUMO proteome reveals co-modification with phosphorylation.</title>
        <authorList>
            <person name="Hendriks I.A."/>
            <person name="Lyon D."/>
            <person name="Young C."/>
            <person name="Jensen L.J."/>
            <person name="Vertegaal A.C."/>
            <person name="Nielsen M.L."/>
        </authorList>
    </citation>
    <scope>SUMOYLATION [LARGE SCALE ANALYSIS] AT LYS-317</scope>
    <scope>IDENTIFICATION BY MASS SPECTROMETRY [LARGE SCALE ANALYSIS]</scope>
</reference>
<accession>P50549</accession>
<accession>A4D118</accession>
<accession>B2R768</accession>
<accession>B7Z2I4</accession>
<accession>B7Z618</accession>
<accession>B7Z9P2</accession>
<accession>C9JT37</accession>
<accession>E9PHB1</accession>
<accession>F5GXR2</accession>
<accession>O75849</accession>
<accession>Q4KMQ6</accession>
<accession>Q59GA7</accession>
<accession>Q6AI30</accession>
<accession>Q9UQ71</accession>
<accession>Q9Y636</accession>
<comment type="function">
    <text evidence="1 9">Transcriptional activator that binds to DNA sequences containing the consensus pentanucleotide 5'-CGGA[AT]-3' (PubMed:7651741). Required for olfactory dopaminergic neuron differentiation; may directly activate expression of tyrosine hydroxylase (TH) (By similarity).</text>
</comment>
<comment type="interaction">
    <interactant intactId="EBI-3905068">
        <id>P50549</id>
    </interactant>
    <interactant intactId="EBI-1176214">
        <id>Q8NHY2</id>
        <label>COP1</label>
    </interactant>
    <organismsDiffer>false</organismsDiffer>
    <experiments>4</experiments>
</comment>
<comment type="interaction">
    <interactant intactId="EBI-3905068">
        <id>P50549</id>
    </interactant>
    <interactant intactId="EBI-2007911">
        <id>Q16236</id>
        <label>NFE2L2</label>
    </interactant>
    <organismsDiffer>false</organismsDiffer>
    <experiments>4</experiments>
</comment>
<comment type="interaction">
    <interactant intactId="EBI-3905068">
        <id>P50549</id>
    </interactant>
    <interactant intactId="EBI-352053">
        <id>P78527</id>
        <label>PRKDC</label>
    </interactant>
    <organismsDiffer>false</organismsDiffer>
    <experiments>2</experiments>
</comment>
<comment type="interaction">
    <interactant intactId="EBI-15926557">
        <id>P50549-1</id>
    </interactant>
    <interactant intactId="EBI-9698228">
        <id>Q8NHY2-1</id>
        <label>COP1</label>
    </interactant>
    <organismsDiffer>false</organismsDiffer>
    <experiments>2</experiments>
</comment>
<comment type="subcellular location">
    <subcellularLocation>
        <location evidence="3">Nucleus</location>
    </subcellularLocation>
</comment>
<comment type="alternative products">
    <event type="alternative splicing"/>
    <isoform>
        <id>P50549-1</id>
        <name>1</name>
        <sequence type="displayed"/>
    </isoform>
    <isoform>
        <id>P50549-2</id>
        <name>2</name>
        <sequence type="described" ref="VSP_001472"/>
    </isoform>
    <isoform>
        <id>P50549-3</id>
        <name>3</name>
        <sequence type="described" ref="VSP_043750"/>
    </isoform>
    <isoform>
        <id>P50549-4</id>
        <name>4</name>
        <sequence type="described" ref="VSP_043808 VSP_043809"/>
    </isoform>
    <isoform>
        <id>P50549-5</id>
        <name>5</name>
        <sequence type="described" ref="VSP_043808 VSP_001472"/>
    </isoform>
    <isoform>
        <id>P50549-6</id>
        <name>6</name>
        <sequence type="described" ref="VSP_043808"/>
    </isoform>
</comment>
<comment type="tissue specificity">
    <text evidence="9">Very highly expressed in brain, highly expressed in testis, lung and heart, moderately in spleen, small intestine, pancreas and colon, weakly in liver, prostate and thymus, very weakly in skeletal muscle, kidney and ovary and not in placenta and peripheral blood leukocytes.</text>
</comment>
<comment type="PTM">
    <text evidence="8">Sumoylated.</text>
</comment>
<comment type="PTM">
    <text evidence="5 6">Phosphorylated at Ser-191 and Ser-216 by RPS6KA1 and RPS6KA5; phosphorylation activates transcriptional activity.</text>
</comment>
<comment type="disease" evidence="10">
    <disease id="DI-02610">
        <name>Ewing sarcoma</name>
        <acronym>ES</acronym>
        <description>A highly malignant, metastatic, primitive small round cell tumor of bone and soft tissue that affects children and adolescents. It belongs to the Ewing sarcoma family of tumors, a group of morphologically heterogeneous neoplasms that share the same cytogenetic features. They are considered neural tumors derived from cells of the neural crest. Ewing sarcoma represents the less differentiated form of the tumors.</description>
        <dbReference type="MIM" id="612219"/>
    </disease>
    <text evidence="10">The gene represented in this entry is involved in disease pathogenesis. A chromosomal aberration involving ETV1 is found in patients with Ewing sarcoma. Translocation t(7;22)(p22;q12) with EWSR1.</text>
</comment>
<comment type="similarity">
    <text evidence="16">Belongs to the ETS family.</text>
</comment>
<comment type="sequence caution" evidence="16">
    <conflict type="erroneous initiation">
        <sequence resource="EMBL-CDS" id="BAD92439"/>
    </conflict>
    <text>Extended N-terminus.</text>
</comment>
<proteinExistence type="evidence at protein level"/>
<gene>
    <name evidence="17" type="primary">ETV1</name>
    <name evidence="14" type="synonym">ER81</name>
</gene>
<name>ETV1_HUMAN</name>
<feature type="chain" id="PRO_0000204110" description="ETS translocation variant 1">
    <location>
        <begin position="1"/>
        <end position="477"/>
    </location>
</feature>
<feature type="DNA-binding region" description="ETS" evidence="3">
    <location>
        <begin position="335"/>
        <end position="415"/>
    </location>
</feature>
<feature type="region of interest" description="Disordered" evidence="4">
    <location>
        <begin position="128"/>
        <end position="179"/>
    </location>
</feature>
<feature type="modified residue" description="Phosphoserine" evidence="2">
    <location>
        <position position="94"/>
    </location>
</feature>
<feature type="modified residue" description="Phosphoserine; by RPS6KA1 and RPS6KA5" evidence="5 6">
    <location>
        <position position="191"/>
    </location>
</feature>
<feature type="modified residue" description="Phosphoserine; by RPS6KA1 and RPS6KA5" evidence="5 6">
    <location>
        <position position="216"/>
    </location>
</feature>
<feature type="cross-link" description="Glycyl lysine isopeptide (Lys-Gly) (interchain with G-Cter in SUMO2)" evidence="19">
    <location>
        <position position="317"/>
    </location>
</feature>
<feature type="splice variant" id="VSP_043808" description="In isoform 4, isoform 5 and isoform 6." evidence="12 13">
    <original>MDGFYDQQVPYMVTNSQRGRNCNEKPTNVRKRKFINRDLAHDSEELFQDLSQLQETWLAE</original>
    <variation>MLQDLSASVFFPPCSQHRTL</variation>
    <location>
        <begin position="1"/>
        <end position="60"/>
    </location>
</feature>
<feature type="splice variant" id="VSP_001472" description="In isoform 2 and isoform 5." evidence="12 14">
    <original>AQVPDNDEQFVPDYQAESL</original>
    <variation>V</variation>
    <location>
        <begin position="61"/>
        <end position="79"/>
    </location>
</feature>
<feature type="splice variant" id="VSP_043809" description="In isoform 4." evidence="12">
    <location>
        <begin position="122"/>
        <end position="184"/>
    </location>
</feature>
<feature type="splice variant" id="VSP_043750" description="In isoform 3." evidence="15">
    <location>
        <begin position="268"/>
        <end position="290"/>
    </location>
</feature>
<feature type="sequence variant" id="VAR_048948" description="In dbSNP:rs9639168." evidence="7 11">
    <original>S</original>
    <variation>G</variation>
    <location>
        <position position="100"/>
    </location>
</feature>
<feature type="mutagenesis site" description="Loss of phosphorylation by RPS6KA5." evidence="6">
    <original>S</original>
    <variation>A</variation>
    <location>
        <position position="191"/>
    </location>
</feature>
<feature type="mutagenesis site" description="Loss of phosphorylation by RPS6KA5." evidence="6">
    <original>S</original>
    <variation>A</variation>
    <location>
        <position position="216"/>
    </location>
</feature>
<feature type="sequence conflict" description="In Ref. 2; CAA60642." evidence="16" ref="2">
    <original>L</original>
    <variation>V</variation>
    <location>
        <position position="39"/>
    </location>
</feature>
<feature type="sequence conflict" description="In Ref. 1; AAA79844." evidence="16" ref="1">
    <original>C</original>
    <variation>S</variation>
    <location>
        <position position="117"/>
    </location>
</feature>
<feature type="sequence conflict" description="In Ref. 1; AAA79844." evidence="16" ref="1">
    <original>K</original>
    <variation>N</variation>
    <location>
        <position position="127"/>
    </location>
</feature>
<feature type="sequence conflict" description="In Ref. 2; CAA60642." evidence="16" ref="2">
    <location>
        <position position="253"/>
    </location>
</feature>
<feature type="sequence conflict" description="In Ref. 2; CAA60642." evidence="16" ref="2">
    <original>S</original>
    <variation>A</variation>
    <location>
        <position position="349"/>
    </location>
</feature>
<feature type="sequence conflict" description="In Ref. 6; CAH10484." evidence="16" ref="6">
    <original>E</original>
    <variation>G</variation>
    <location>
        <position position="445"/>
    </location>
</feature>
<feature type="sequence conflict" description="In Ref. 4; BAH13104." evidence="16" ref="4">
    <original>Y</original>
    <variation>C</variation>
    <location>
        <position position="471"/>
    </location>
</feature>
<feature type="helix" evidence="20">
    <location>
        <begin position="337"/>
        <end position="346"/>
    </location>
</feature>
<feature type="helix" evidence="20">
    <location>
        <begin position="348"/>
        <end position="350"/>
    </location>
</feature>
<feature type="turn" evidence="20">
    <location>
        <begin position="351"/>
        <end position="353"/>
    </location>
</feature>
<feature type="strand" evidence="20">
    <location>
        <begin position="354"/>
        <end position="356"/>
    </location>
</feature>
<feature type="strand" evidence="20">
    <location>
        <begin position="362"/>
        <end position="367"/>
    </location>
</feature>
<feature type="helix" evidence="20">
    <location>
        <begin position="368"/>
        <end position="379"/>
    </location>
</feature>
<feature type="helix" evidence="20">
    <location>
        <begin position="386"/>
        <end position="398"/>
    </location>
</feature>
<feature type="strand" evidence="20">
    <location>
        <begin position="401"/>
        <end position="404"/>
    </location>
</feature>
<feature type="strand" evidence="20">
    <location>
        <begin position="409"/>
        <end position="414"/>
    </location>
</feature>
<feature type="helix" evidence="20">
    <location>
        <begin position="418"/>
        <end position="425"/>
    </location>
</feature>
<evidence type="ECO:0000250" key="1">
    <source>
        <dbReference type="UniProtKB" id="P41164"/>
    </source>
</evidence>
<evidence type="ECO:0000250" key="2">
    <source>
        <dbReference type="UniProtKB" id="P43268"/>
    </source>
</evidence>
<evidence type="ECO:0000255" key="3">
    <source>
        <dbReference type="PROSITE-ProRule" id="PRU00237"/>
    </source>
</evidence>
<evidence type="ECO:0000256" key="4">
    <source>
        <dbReference type="SAM" id="MobiDB-lite"/>
    </source>
</evidence>
<evidence type="ECO:0000269" key="5">
    <source>
    </source>
</evidence>
<evidence type="ECO:0000269" key="6">
    <source>
    </source>
</evidence>
<evidence type="ECO:0000269" key="7">
    <source>
    </source>
</evidence>
<evidence type="ECO:0000269" key="8">
    <source>
    </source>
</evidence>
<evidence type="ECO:0000269" key="9">
    <source>
    </source>
</evidence>
<evidence type="ECO:0000269" key="10">
    <source>
    </source>
</evidence>
<evidence type="ECO:0000269" key="11">
    <source ref="5"/>
</evidence>
<evidence type="ECO:0000303" key="12">
    <source>
    </source>
</evidence>
<evidence type="ECO:0000303" key="13">
    <source>
    </source>
</evidence>
<evidence type="ECO:0000303" key="14">
    <source>
    </source>
</evidence>
<evidence type="ECO:0000303" key="15">
    <source ref="5"/>
</evidence>
<evidence type="ECO:0000305" key="16"/>
<evidence type="ECO:0000312" key="17">
    <source>
        <dbReference type="HGNC" id="HGNC:3490"/>
    </source>
</evidence>
<evidence type="ECO:0000312" key="18">
    <source>
        <dbReference type="Proteomes" id="UP000005640"/>
    </source>
</evidence>
<evidence type="ECO:0007744" key="19">
    <source>
    </source>
</evidence>
<evidence type="ECO:0007829" key="20">
    <source>
        <dbReference type="PDB" id="5ILS"/>
    </source>
</evidence>
<sequence>MDGFYDQQVPYMVTNSQRGRNCNEKPTNVRKRKFINRDLAHDSEELFQDLSQLQETWLAEAQVPDNDEQFVPDYQAESLAFHGLPLKIKKEPHSPCSEISSACSQEQPFKFSYGEKCLYNVSAYDQKPQVGMRPSNPPTPSSTPVSPLHHASPNSTHTPKPDRAFPAHLPPSQSIPDSSYPMDHRFRRQLSEPCNSFPPLPTMPREGRPMYQRQMSEPNIPFPPQGFKQEYHDPVYEHNTMVGSAASQSFPPPLMIKQEPRDFAYDSEVPSCHSIYMRQEGFLAHPSRTEGCMFEKGPRQFYDDTCVVPEKFDGDIKQEPGMYREGPTYQRRGSLQLWQFLVALLDDPSNSHFIAWTGRGMEFKLIEPEEVARRWGIQKNRPAMNYDKLSRSLRYYYEKGIMQKVAGERYVYKFVCDPEALFSMAFPDNQRPLLKTDMERHINEEDTVPLSHFDESMAYMPEGGCCNPHPYNEGYVY</sequence>
<dbReference type="EMBL" id="U17163">
    <property type="protein sequence ID" value="AAA79844.1"/>
    <property type="molecule type" value="mRNA"/>
</dbReference>
<dbReference type="EMBL" id="X87175">
    <property type="protein sequence ID" value="CAA60642.1"/>
    <property type="molecule type" value="mRNA"/>
</dbReference>
<dbReference type="EMBL" id="AF109632">
    <property type="protein sequence ID" value="AAD29877.1"/>
    <property type="molecule type" value="Genomic_DNA"/>
</dbReference>
<dbReference type="EMBL" id="AF109621">
    <property type="protein sequence ID" value="AAD29877.1"/>
    <property type="status" value="JOINED"/>
    <property type="molecule type" value="Genomic_DNA"/>
</dbReference>
<dbReference type="EMBL" id="AF109622">
    <property type="protein sequence ID" value="AAD29877.1"/>
    <property type="status" value="JOINED"/>
    <property type="molecule type" value="Genomic_DNA"/>
</dbReference>
<dbReference type="EMBL" id="AF109623">
    <property type="protein sequence ID" value="AAD29877.1"/>
    <property type="status" value="JOINED"/>
    <property type="molecule type" value="Genomic_DNA"/>
</dbReference>
<dbReference type="EMBL" id="AF109624">
    <property type="protein sequence ID" value="AAD29877.1"/>
    <property type="status" value="JOINED"/>
    <property type="molecule type" value="Genomic_DNA"/>
</dbReference>
<dbReference type="EMBL" id="AF109625">
    <property type="protein sequence ID" value="AAD29877.1"/>
    <property type="status" value="JOINED"/>
    <property type="molecule type" value="Genomic_DNA"/>
</dbReference>
<dbReference type="EMBL" id="AF109626">
    <property type="protein sequence ID" value="AAD29877.1"/>
    <property type="status" value="JOINED"/>
    <property type="molecule type" value="Genomic_DNA"/>
</dbReference>
<dbReference type="EMBL" id="AF109627">
    <property type="protein sequence ID" value="AAD29877.1"/>
    <property type="status" value="JOINED"/>
    <property type="molecule type" value="Genomic_DNA"/>
</dbReference>
<dbReference type="EMBL" id="AF109628">
    <property type="protein sequence ID" value="AAD29877.1"/>
    <property type="status" value="JOINED"/>
    <property type="molecule type" value="Genomic_DNA"/>
</dbReference>
<dbReference type="EMBL" id="AF109629">
    <property type="protein sequence ID" value="AAD29877.1"/>
    <property type="status" value="JOINED"/>
    <property type="molecule type" value="Genomic_DNA"/>
</dbReference>
<dbReference type="EMBL" id="AF109630">
    <property type="protein sequence ID" value="AAD29877.1"/>
    <property type="status" value="JOINED"/>
    <property type="molecule type" value="Genomic_DNA"/>
</dbReference>
<dbReference type="EMBL" id="AF109631">
    <property type="protein sequence ID" value="AAD29877.1"/>
    <property type="status" value="JOINED"/>
    <property type="molecule type" value="Genomic_DNA"/>
</dbReference>
<dbReference type="EMBL" id="AF109632">
    <property type="protein sequence ID" value="AAD29878.1"/>
    <property type="molecule type" value="Genomic_DNA"/>
</dbReference>
<dbReference type="EMBL" id="AF109621">
    <property type="protein sequence ID" value="AAD29878.1"/>
    <property type="status" value="JOINED"/>
    <property type="molecule type" value="Genomic_DNA"/>
</dbReference>
<dbReference type="EMBL" id="AF109622">
    <property type="protein sequence ID" value="AAD29878.1"/>
    <property type="status" value="JOINED"/>
    <property type="molecule type" value="Genomic_DNA"/>
</dbReference>
<dbReference type="EMBL" id="AF109623">
    <property type="protein sequence ID" value="AAD29878.1"/>
    <property type="status" value="JOINED"/>
    <property type="molecule type" value="Genomic_DNA"/>
</dbReference>
<dbReference type="EMBL" id="AF109625">
    <property type="protein sequence ID" value="AAD29878.1"/>
    <property type="status" value="JOINED"/>
    <property type="molecule type" value="Genomic_DNA"/>
</dbReference>
<dbReference type="EMBL" id="AF109626">
    <property type="protein sequence ID" value="AAD29878.1"/>
    <property type="status" value="JOINED"/>
    <property type="molecule type" value="Genomic_DNA"/>
</dbReference>
<dbReference type="EMBL" id="AF109627">
    <property type="protein sequence ID" value="AAD29878.1"/>
    <property type="status" value="JOINED"/>
    <property type="molecule type" value="Genomic_DNA"/>
</dbReference>
<dbReference type="EMBL" id="AF109628">
    <property type="protein sequence ID" value="AAD29878.1"/>
    <property type="status" value="JOINED"/>
    <property type="molecule type" value="Genomic_DNA"/>
</dbReference>
<dbReference type="EMBL" id="AF109629">
    <property type="protein sequence ID" value="AAD29878.1"/>
    <property type="status" value="JOINED"/>
    <property type="molecule type" value="Genomic_DNA"/>
</dbReference>
<dbReference type="EMBL" id="AF109630">
    <property type="protein sequence ID" value="AAD29878.1"/>
    <property type="status" value="JOINED"/>
    <property type="molecule type" value="Genomic_DNA"/>
</dbReference>
<dbReference type="EMBL" id="AF109631">
    <property type="protein sequence ID" value="AAD29878.1"/>
    <property type="status" value="JOINED"/>
    <property type="molecule type" value="Genomic_DNA"/>
</dbReference>
<dbReference type="EMBL" id="AK294755">
    <property type="protein sequence ID" value="BAH11870.1"/>
    <property type="molecule type" value="mRNA"/>
</dbReference>
<dbReference type="EMBL" id="AK299693">
    <property type="protein sequence ID" value="BAH13104.1"/>
    <property type="molecule type" value="mRNA"/>
</dbReference>
<dbReference type="EMBL" id="AK312863">
    <property type="protein sequence ID" value="BAG35715.1"/>
    <property type="molecule type" value="mRNA"/>
</dbReference>
<dbReference type="EMBL" id="AK316007">
    <property type="protein sequence ID" value="BAH14378.1"/>
    <property type="molecule type" value="mRNA"/>
</dbReference>
<dbReference type="EMBL" id="AB209202">
    <property type="protein sequence ID" value="BAD92439.1"/>
    <property type="status" value="ALT_INIT"/>
    <property type="molecule type" value="mRNA"/>
</dbReference>
<dbReference type="EMBL" id="CR627389">
    <property type="protein sequence ID" value="CAH10484.1"/>
    <property type="molecule type" value="mRNA"/>
</dbReference>
<dbReference type="EMBL" id="AC004857">
    <property type="protein sequence ID" value="AAC62435.1"/>
    <property type="molecule type" value="Genomic_DNA"/>
</dbReference>
<dbReference type="EMBL" id="AC004909">
    <property type="status" value="NOT_ANNOTATED_CDS"/>
    <property type="molecule type" value="Genomic_DNA"/>
</dbReference>
<dbReference type="EMBL" id="CH236948">
    <property type="protein sequence ID" value="EAL24294.1"/>
    <property type="molecule type" value="Genomic_DNA"/>
</dbReference>
<dbReference type="EMBL" id="BC098403">
    <property type="protein sequence ID" value="AAH98403.1"/>
    <property type="molecule type" value="mRNA"/>
</dbReference>
<dbReference type="EMBL" id="BC106762">
    <property type="protein sequence ID" value="AAI06763.1"/>
    <property type="molecule type" value="mRNA"/>
</dbReference>
<dbReference type="EMBL" id="BC106763">
    <property type="protein sequence ID" value="AAI06764.1"/>
    <property type="molecule type" value="mRNA"/>
</dbReference>
<dbReference type="CCDS" id="CCDS55083.1">
    <molecule id="P50549-5"/>
</dbReference>
<dbReference type="CCDS" id="CCDS55084.1">
    <molecule id="P50549-4"/>
</dbReference>
<dbReference type="CCDS" id="CCDS55085.1">
    <molecule id="P50549-6"/>
</dbReference>
<dbReference type="CCDS" id="CCDS55086.1">
    <molecule id="P50549-2"/>
</dbReference>
<dbReference type="CCDS" id="CCDS55087.1">
    <molecule id="P50549-3"/>
</dbReference>
<dbReference type="CCDS" id="CCDS55088.1">
    <molecule id="P50549-1"/>
</dbReference>
<dbReference type="PIR" id="I38893">
    <property type="entry name" value="I38893"/>
</dbReference>
<dbReference type="RefSeq" id="NP_001156619.1">
    <molecule id="P50549-3"/>
    <property type="nucleotide sequence ID" value="NM_001163147.2"/>
</dbReference>
<dbReference type="RefSeq" id="NP_001156620.1">
    <molecule id="P50549-2"/>
    <property type="nucleotide sequence ID" value="NM_001163148.2"/>
</dbReference>
<dbReference type="RefSeq" id="NP_001156621.1">
    <molecule id="P50549-2"/>
    <property type="nucleotide sequence ID" value="NM_001163149.2"/>
</dbReference>
<dbReference type="RefSeq" id="NP_001156622.1">
    <molecule id="P50549-6"/>
    <property type="nucleotide sequence ID" value="NM_001163150.2"/>
</dbReference>
<dbReference type="RefSeq" id="NP_001156623.1">
    <molecule id="P50549-5"/>
    <property type="nucleotide sequence ID" value="NM_001163151.2"/>
</dbReference>
<dbReference type="RefSeq" id="NP_001156624.1">
    <molecule id="P50549-4"/>
    <property type="nucleotide sequence ID" value="NM_001163152.2"/>
</dbReference>
<dbReference type="RefSeq" id="NP_001357484.1">
    <molecule id="P50549-1"/>
    <property type="nucleotide sequence ID" value="NM_001370555.1"/>
</dbReference>
<dbReference type="RefSeq" id="NP_004947.2">
    <molecule id="P50549-1"/>
    <property type="nucleotide sequence ID" value="NM_004956.4"/>
</dbReference>
<dbReference type="RefSeq" id="XP_005249692.1">
    <property type="nucleotide sequence ID" value="XM_005249635.4"/>
</dbReference>
<dbReference type="RefSeq" id="XP_005249693.1">
    <property type="nucleotide sequence ID" value="XM_005249636.4"/>
</dbReference>
<dbReference type="RefSeq" id="XP_011513470.1">
    <molecule id="P50549-1"/>
    <property type="nucleotide sequence ID" value="XM_011515168.4"/>
</dbReference>
<dbReference type="RefSeq" id="XP_047275941.1">
    <molecule id="P50549-1"/>
    <property type="nucleotide sequence ID" value="XM_047419985.1"/>
</dbReference>
<dbReference type="RefSeq" id="XP_047275942.1">
    <molecule id="P50549-1"/>
    <property type="nucleotide sequence ID" value="XM_047419986.1"/>
</dbReference>
<dbReference type="RefSeq" id="XP_047275943.1">
    <molecule id="P50549-2"/>
    <property type="nucleotide sequence ID" value="XM_047419987.1"/>
</dbReference>
<dbReference type="RefSeq" id="XP_047275944.1">
    <molecule id="P50549-2"/>
    <property type="nucleotide sequence ID" value="XM_047419988.1"/>
</dbReference>
<dbReference type="RefSeq" id="XP_054213448.1">
    <molecule id="P50549-1"/>
    <property type="nucleotide sequence ID" value="XM_054357473.1"/>
</dbReference>
<dbReference type="RefSeq" id="XP_054213449.1">
    <molecule id="P50549-1"/>
    <property type="nucleotide sequence ID" value="XM_054357474.1"/>
</dbReference>
<dbReference type="RefSeq" id="XP_054213450.1">
    <molecule id="P50549-1"/>
    <property type="nucleotide sequence ID" value="XM_054357475.1"/>
</dbReference>
<dbReference type="RefSeq" id="XP_054213453.1">
    <molecule id="P50549-2"/>
    <property type="nucleotide sequence ID" value="XM_054357478.1"/>
</dbReference>
<dbReference type="RefSeq" id="XP_054213454.1">
    <molecule id="P50549-2"/>
    <property type="nucleotide sequence ID" value="XM_054357479.1"/>
</dbReference>
<dbReference type="PDB" id="4AVP">
    <property type="method" value="X-ray"/>
    <property type="resolution" value="1.82 A"/>
    <property type="chains" value="A/B/C/D=326-429"/>
</dbReference>
<dbReference type="PDB" id="4BNC">
    <property type="method" value="X-ray"/>
    <property type="resolution" value="2.90 A"/>
    <property type="chains" value="A=326-429"/>
</dbReference>
<dbReference type="PDB" id="5ILS">
    <property type="method" value="X-ray"/>
    <property type="resolution" value="1.40 A"/>
    <property type="chains" value="A=334-434"/>
</dbReference>
<dbReference type="PDBsum" id="4AVP"/>
<dbReference type="PDBsum" id="4BNC"/>
<dbReference type="PDBsum" id="5ILS"/>
<dbReference type="SMR" id="P50549"/>
<dbReference type="BioGRID" id="108416">
    <property type="interactions" value="31"/>
</dbReference>
<dbReference type="DIP" id="DIP-60463N"/>
<dbReference type="FunCoup" id="P50549">
    <property type="interactions" value="1401"/>
</dbReference>
<dbReference type="IntAct" id="P50549">
    <property type="interactions" value="10"/>
</dbReference>
<dbReference type="MINT" id="P50549"/>
<dbReference type="STRING" id="9606.ENSP00000405327"/>
<dbReference type="BindingDB" id="P50549"/>
<dbReference type="ChEMBL" id="CHEMBL2010626"/>
<dbReference type="GlyGen" id="P50549">
    <property type="glycosylation" value="2 sites, 1 O-linked glycan (1 site)"/>
</dbReference>
<dbReference type="iPTMnet" id="P50549"/>
<dbReference type="PhosphoSitePlus" id="P50549"/>
<dbReference type="BioMuta" id="ETV1"/>
<dbReference type="DMDM" id="12643411"/>
<dbReference type="MassIVE" id="P50549"/>
<dbReference type="PaxDb" id="9606-ENSP00000405327"/>
<dbReference type="PeptideAtlas" id="P50549"/>
<dbReference type="ProteomicsDB" id="20494"/>
<dbReference type="ProteomicsDB" id="24498"/>
<dbReference type="ProteomicsDB" id="56244">
    <molecule id="P50549-1"/>
</dbReference>
<dbReference type="ProteomicsDB" id="56245">
    <molecule id="P50549-2"/>
</dbReference>
<dbReference type="ProteomicsDB" id="56246">
    <molecule id="P50549-3"/>
</dbReference>
<dbReference type="ProteomicsDB" id="56247">
    <molecule id="P50549-4"/>
</dbReference>
<dbReference type="Antibodypedia" id="25156">
    <property type="antibodies" value="318 antibodies from 33 providers"/>
</dbReference>
<dbReference type="DNASU" id="2115"/>
<dbReference type="Ensembl" id="ENST00000242066.10">
    <molecule id="P50549-2"/>
    <property type="protein sequence ID" value="ENSP00000242066.5"/>
    <property type="gene ID" value="ENSG00000006468.15"/>
</dbReference>
<dbReference type="Ensembl" id="ENST00000403527.6">
    <molecule id="P50549-6"/>
    <property type="protein sequence ID" value="ENSP00000384138.1"/>
    <property type="gene ID" value="ENSG00000006468.15"/>
</dbReference>
<dbReference type="Ensembl" id="ENST00000403685.5">
    <molecule id="P50549-2"/>
    <property type="protein sequence ID" value="ENSP00000385686.1"/>
    <property type="gene ID" value="ENSG00000006468.15"/>
</dbReference>
<dbReference type="Ensembl" id="ENST00000405192.6">
    <molecule id="P50549-3"/>
    <property type="protein sequence ID" value="ENSP00000385381.2"/>
    <property type="gene ID" value="ENSG00000006468.15"/>
</dbReference>
<dbReference type="Ensembl" id="ENST00000405218.6">
    <molecule id="P50549-1"/>
    <property type="protein sequence ID" value="ENSP00000385551.2"/>
    <property type="gene ID" value="ENSG00000006468.15"/>
</dbReference>
<dbReference type="Ensembl" id="ENST00000430479.6">
    <molecule id="P50549-1"/>
    <property type="protein sequence ID" value="ENSP00000405327.1"/>
    <property type="gene ID" value="ENSG00000006468.15"/>
</dbReference>
<dbReference type="Ensembl" id="ENST00000438956.6">
    <molecule id="P50549-5"/>
    <property type="protein sequence ID" value="ENSP00000393078.2"/>
    <property type="gene ID" value="ENSG00000006468.15"/>
</dbReference>
<dbReference type="Ensembl" id="ENST00000443608.6">
    <molecule id="P50549-4"/>
    <property type="protein sequence ID" value="ENSP00000394710.2"/>
    <property type="gene ID" value="ENSG00000006468.15"/>
</dbReference>
<dbReference type="GeneID" id="2115"/>
<dbReference type="KEGG" id="hsa:2115"/>
<dbReference type="MANE-Select" id="ENST00000430479.6">
    <property type="protein sequence ID" value="ENSP00000405327.1"/>
    <property type="RefSeq nucleotide sequence ID" value="NM_004956.5"/>
    <property type="RefSeq protein sequence ID" value="NP_004947.2"/>
</dbReference>
<dbReference type="UCSC" id="uc003ssw.5">
    <molecule id="P50549-1"/>
    <property type="organism name" value="human"/>
</dbReference>
<dbReference type="AGR" id="HGNC:3490"/>
<dbReference type="CTD" id="2115"/>
<dbReference type="DisGeNET" id="2115"/>
<dbReference type="GeneCards" id="ETV1"/>
<dbReference type="HGNC" id="HGNC:3490">
    <property type="gene designation" value="ETV1"/>
</dbReference>
<dbReference type="HPA" id="ENSG00000006468">
    <property type="expression patterns" value="Tissue enhanced (brain, salivary gland)"/>
</dbReference>
<dbReference type="MalaCards" id="ETV1"/>
<dbReference type="MIM" id="600541">
    <property type="type" value="gene"/>
</dbReference>
<dbReference type="MIM" id="612219">
    <property type="type" value="phenotype"/>
</dbReference>
<dbReference type="neXtProt" id="NX_P50549"/>
<dbReference type="OpenTargets" id="ENSG00000006468"/>
<dbReference type="Orphanet" id="319">
    <property type="disease" value="Skeletal Ewing sarcoma"/>
</dbReference>
<dbReference type="PharmGKB" id="PA27904"/>
<dbReference type="VEuPathDB" id="HostDB:ENSG00000006468"/>
<dbReference type="eggNOG" id="KOG3806">
    <property type="taxonomic scope" value="Eukaryota"/>
</dbReference>
<dbReference type="GeneTree" id="ENSGT00940000157123"/>
<dbReference type="HOGENOM" id="CLU_030025_1_0_1"/>
<dbReference type="InParanoid" id="P50549"/>
<dbReference type="OMA" id="DYQAESX"/>
<dbReference type="OrthoDB" id="10067219at2759"/>
<dbReference type="PAN-GO" id="P50549">
    <property type="GO annotations" value="4 GO annotations based on evolutionary models"/>
</dbReference>
<dbReference type="PhylomeDB" id="P50549"/>
<dbReference type="TreeFam" id="TF316214"/>
<dbReference type="PathwayCommons" id="P50549"/>
<dbReference type="SignaLink" id="P50549"/>
<dbReference type="SIGNOR" id="P50549"/>
<dbReference type="BioGRID-ORCS" id="2115">
    <property type="hits" value="20 hits in 1182 CRISPR screens"/>
</dbReference>
<dbReference type="ChiTaRS" id="ETV1">
    <property type="organism name" value="human"/>
</dbReference>
<dbReference type="EvolutionaryTrace" id="P50549"/>
<dbReference type="GeneWiki" id="ETV1"/>
<dbReference type="GenomeRNAi" id="2115"/>
<dbReference type="Pharos" id="P50549">
    <property type="development level" value="Tbio"/>
</dbReference>
<dbReference type="PRO" id="PR:P50549"/>
<dbReference type="Proteomes" id="UP000005640">
    <property type="component" value="Chromosome 7"/>
</dbReference>
<dbReference type="RNAct" id="P50549">
    <property type="molecule type" value="protein"/>
</dbReference>
<dbReference type="Bgee" id="ENSG00000006468">
    <property type="expression patterns" value="Expressed in cerebellar vermis and 176 other cell types or tissues"/>
</dbReference>
<dbReference type="ExpressionAtlas" id="P50549">
    <property type="expression patterns" value="baseline and differential"/>
</dbReference>
<dbReference type="GO" id="GO:0000785">
    <property type="term" value="C:chromatin"/>
    <property type="evidence" value="ECO:0000247"/>
    <property type="project" value="NTNU_SB"/>
</dbReference>
<dbReference type="GO" id="GO:0005634">
    <property type="term" value="C:nucleus"/>
    <property type="evidence" value="ECO:0000318"/>
    <property type="project" value="GO_Central"/>
</dbReference>
<dbReference type="GO" id="GO:0001228">
    <property type="term" value="F:DNA-binding transcription activator activity, RNA polymerase II-specific"/>
    <property type="evidence" value="ECO:0000314"/>
    <property type="project" value="NTNU_SB"/>
</dbReference>
<dbReference type="GO" id="GO:0003700">
    <property type="term" value="F:DNA-binding transcription factor activity"/>
    <property type="evidence" value="ECO:0000304"/>
    <property type="project" value="ProtInc"/>
</dbReference>
<dbReference type="GO" id="GO:0000981">
    <property type="term" value="F:DNA-binding transcription factor activity, RNA polymerase II-specific"/>
    <property type="evidence" value="ECO:0000247"/>
    <property type="project" value="NTNU_SB"/>
</dbReference>
<dbReference type="GO" id="GO:0000978">
    <property type="term" value="F:RNA polymerase II cis-regulatory region sequence-specific DNA binding"/>
    <property type="evidence" value="ECO:0000314"/>
    <property type="project" value="NTNU_SB"/>
</dbReference>
<dbReference type="GO" id="GO:1990837">
    <property type="term" value="F:sequence-specific double-stranded DNA binding"/>
    <property type="evidence" value="ECO:0000314"/>
    <property type="project" value="ARUK-UCL"/>
</dbReference>
<dbReference type="GO" id="GO:0007411">
    <property type="term" value="P:axon guidance"/>
    <property type="evidence" value="ECO:0007669"/>
    <property type="project" value="Ensembl"/>
</dbReference>
<dbReference type="GO" id="GO:0030154">
    <property type="term" value="P:cell differentiation"/>
    <property type="evidence" value="ECO:0000318"/>
    <property type="project" value="GO_Central"/>
</dbReference>
<dbReference type="GO" id="GO:0007638">
    <property type="term" value="P:mechanosensory behavior"/>
    <property type="evidence" value="ECO:0007669"/>
    <property type="project" value="Ensembl"/>
</dbReference>
<dbReference type="GO" id="GO:0007517">
    <property type="term" value="P:muscle organ development"/>
    <property type="evidence" value="ECO:0007669"/>
    <property type="project" value="Ensembl"/>
</dbReference>
<dbReference type="GO" id="GO:0048935">
    <property type="term" value="P:peripheral nervous system neuron development"/>
    <property type="evidence" value="ECO:0000304"/>
    <property type="project" value="BHF-UCL"/>
</dbReference>
<dbReference type="GO" id="GO:0045944">
    <property type="term" value="P:positive regulation of transcription by RNA polymerase II"/>
    <property type="evidence" value="ECO:0000314"/>
    <property type="project" value="NTNU_SB"/>
</dbReference>
<dbReference type="GO" id="GO:0006357">
    <property type="term" value="P:regulation of transcription by RNA polymerase II"/>
    <property type="evidence" value="ECO:0000318"/>
    <property type="project" value="GO_Central"/>
</dbReference>
<dbReference type="GO" id="GO:0006366">
    <property type="term" value="P:transcription by RNA polymerase II"/>
    <property type="evidence" value="ECO:0000304"/>
    <property type="project" value="ProtInc"/>
</dbReference>
<dbReference type="FunFam" id="1.10.10.10:FF:000121">
    <property type="entry name" value="ETS translocation variant 5"/>
    <property type="match status" value="1"/>
</dbReference>
<dbReference type="Gene3D" id="1.10.10.10">
    <property type="entry name" value="Winged helix-like DNA-binding domain superfamily/Winged helix DNA-binding domain"/>
    <property type="match status" value="1"/>
</dbReference>
<dbReference type="InterPro" id="IPR000418">
    <property type="entry name" value="Ets_dom"/>
</dbReference>
<dbReference type="InterPro" id="IPR046328">
    <property type="entry name" value="ETS_fam"/>
</dbReference>
<dbReference type="InterPro" id="IPR006715">
    <property type="entry name" value="ETS_PEA3_N"/>
</dbReference>
<dbReference type="InterPro" id="IPR036388">
    <property type="entry name" value="WH-like_DNA-bd_sf"/>
</dbReference>
<dbReference type="InterPro" id="IPR036390">
    <property type="entry name" value="WH_DNA-bd_sf"/>
</dbReference>
<dbReference type="PANTHER" id="PTHR11849">
    <property type="entry name" value="ETS"/>
    <property type="match status" value="1"/>
</dbReference>
<dbReference type="PANTHER" id="PTHR11849:SF196">
    <property type="entry name" value="ETS TRANSLOCATION VARIANT 1"/>
    <property type="match status" value="1"/>
</dbReference>
<dbReference type="Pfam" id="PF00178">
    <property type="entry name" value="Ets"/>
    <property type="match status" value="1"/>
</dbReference>
<dbReference type="Pfam" id="PF04621">
    <property type="entry name" value="ETS_PEA3_N"/>
    <property type="match status" value="1"/>
</dbReference>
<dbReference type="PRINTS" id="PR00454">
    <property type="entry name" value="ETSDOMAIN"/>
</dbReference>
<dbReference type="SMART" id="SM00413">
    <property type="entry name" value="ETS"/>
    <property type="match status" value="1"/>
</dbReference>
<dbReference type="SUPFAM" id="SSF46785">
    <property type="entry name" value="Winged helix' DNA-binding domain"/>
    <property type="match status" value="1"/>
</dbReference>
<dbReference type="PROSITE" id="PS00345">
    <property type="entry name" value="ETS_DOMAIN_1"/>
    <property type="match status" value="1"/>
</dbReference>
<dbReference type="PROSITE" id="PS00346">
    <property type="entry name" value="ETS_DOMAIN_2"/>
    <property type="match status" value="1"/>
</dbReference>
<dbReference type="PROSITE" id="PS50061">
    <property type="entry name" value="ETS_DOMAIN_3"/>
    <property type="match status" value="1"/>
</dbReference>
<keyword id="KW-0002">3D-structure</keyword>
<keyword id="KW-0010">Activator</keyword>
<keyword id="KW-0025">Alternative splicing</keyword>
<keyword id="KW-0160">Chromosomal rearrangement</keyword>
<keyword id="KW-0225">Disease variant</keyword>
<keyword id="KW-0238">DNA-binding</keyword>
<keyword id="KW-1017">Isopeptide bond</keyword>
<keyword id="KW-0539">Nucleus</keyword>
<keyword id="KW-0597">Phosphoprotein</keyword>
<keyword id="KW-1267">Proteomics identification</keyword>
<keyword id="KW-0656">Proto-oncogene</keyword>
<keyword id="KW-1185">Reference proteome</keyword>
<keyword id="KW-0804">Transcription</keyword>
<keyword id="KW-0805">Transcription regulation</keyword>
<keyword id="KW-0832">Ubl conjugation</keyword>